<gene>
    <name evidence="2" type="primary">rpsL</name>
    <name type="ordered locus">Rru_A2693</name>
</gene>
<name>RS12_RHORT</name>
<organism>
    <name type="scientific">Rhodospirillum rubrum (strain ATCC 11170 / ATH 1.1.1 / DSM 467 / LMG 4362 / NCIMB 8255 / S1)</name>
    <dbReference type="NCBI Taxonomy" id="269796"/>
    <lineage>
        <taxon>Bacteria</taxon>
        <taxon>Pseudomonadati</taxon>
        <taxon>Pseudomonadota</taxon>
        <taxon>Alphaproteobacteria</taxon>
        <taxon>Rhodospirillales</taxon>
        <taxon>Rhodospirillaceae</taxon>
        <taxon>Rhodospirillum</taxon>
    </lineage>
</organism>
<sequence>MPTINQLIRKPRKAVVKRNKVPAMQACPQKRGVCTRVYTTTPKKPNSALRKVARVRLTNGFEVTSYIPGEGHNLQEHSVVMIRGGRVKDLPGVRYHIIRGVLDTQGVKDRRQRRSKYGAKRPK</sequence>
<comment type="function">
    <text evidence="2">With S4 and S5 plays an important role in translational accuracy.</text>
</comment>
<comment type="function">
    <text evidence="2">Interacts with and stabilizes bases of the 16S rRNA that are involved in tRNA selection in the A site and with the mRNA backbone. Located at the interface of the 30S and 50S subunits, it traverses the body of the 30S subunit contacting proteins on the other side and probably holding the rRNA structure together. The combined cluster of proteins S8, S12 and S17 appears to hold together the shoulder and platform of the 30S subunit.</text>
</comment>
<comment type="subunit">
    <text evidence="2">Part of the 30S ribosomal subunit. Contacts proteins S8 and S17. May interact with IF1 in the 30S initiation complex.</text>
</comment>
<comment type="similarity">
    <text evidence="2">Belongs to the universal ribosomal protein uS12 family.</text>
</comment>
<reference key="1">
    <citation type="journal article" date="2011" name="Stand. Genomic Sci.">
        <title>Complete genome sequence of Rhodospirillum rubrum type strain (S1).</title>
        <authorList>
            <person name="Munk A.C."/>
            <person name="Copeland A."/>
            <person name="Lucas S."/>
            <person name="Lapidus A."/>
            <person name="Del Rio T.G."/>
            <person name="Barry K."/>
            <person name="Detter J.C."/>
            <person name="Hammon N."/>
            <person name="Israni S."/>
            <person name="Pitluck S."/>
            <person name="Brettin T."/>
            <person name="Bruce D."/>
            <person name="Han C."/>
            <person name="Tapia R."/>
            <person name="Gilna P."/>
            <person name="Schmutz J."/>
            <person name="Larimer F."/>
            <person name="Land M."/>
            <person name="Kyrpides N.C."/>
            <person name="Mavromatis K."/>
            <person name="Richardson P."/>
            <person name="Rohde M."/>
            <person name="Goeker M."/>
            <person name="Klenk H.P."/>
            <person name="Zhang Y."/>
            <person name="Roberts G.P."/>
            <person name="Reslewic S."/>
            <person name="Schwartz D.C."/>
        </authorList>
    </citation>
    <scope>NUCLEOTIDE SEQUENCE [LARGE SCALE GENOMIC DNA]</scope>
    <source>
        <strain>ATCC 11170 / ATH 1.1.1 / DSM 467 / LMG 4362 / NCIMB 8255 / S1</strain>
    </source>
</reference>
<protein>
    <recommendedName>
        <fullName evidence="2">Small ribosomal subunit protein uS12</fullName>
    </recommendedName>
    <alternativeName>
        <fullName evidence="4">30S ribosomal protein S12</fullName>
    </alternativeName>
</protein>
<feature type="chain" id="PRO_0000238141" description="Small ribosomal subunit protein uS12">
    <location>
        <begin position="1"/>
        <end position="123"/>
    </location>
</feature>
<feature type="region of interest" description="Disordered" evidence="3">
    <location>
        <begin position="104"/>
        <end position="123"/>
    </location>
</feature>
<feature type="compositionally biased region" description="Basic residues" evidence="3">
    <location>
        <begin position="110"/>
        <end position="123"/>
    </location>
</feature>
<feature type="modified residue" description="3-methylthioaspartic acid" evidence="1">
    <location>
        <position position="89"/>
    </location>
</feature>
<keyword id="KW-0488">Methylation</keyword>
<keyword id="KW-1185">Reference proteome</keyword>
<keyword id="KW-0687">Ribonucleoprotein</keyword>
<keyword id="KW-0689">Ribosomal protein</keyword>
<keyword id="KW-0694">RNA-binding</keyword>
<keyword id="KW-0699">rRNA-binding</keyword>
<keyword id="KW-0820">tRNA-binding</keyword>
<proteinExistence type="inferred from homology"/>
<accession>Q2RQV5</accession>
<dbReference type="EMBL" id="CP000230">
    <property type="protein sequence ID" value="ABC23490.1"/>
    <property type="molecule type" value="Genomic_DNA"/>
</dbReference>
<dbReference type="RefSeq" id="WP_011390503.1">
    <property type="nucleotide sequence ID" value="NC_007643.1"/>
</dbReference>
<dbReference type="RefSeq" id="YP_427777.1">
    <property type="nucleotide sequence ID" value="NC_007643.1"/>
</dbReference>
<dbReference type="SMR" id="Q2RQV5"/>
<dbReference type="STRING" id="269796.Rru_A2693"/>
<dbReference type="EnsemblBacteria" id="ABC23490">
    <property type="protein sequence ID" value="ABC23490"/>
    <property type="gene ID" value="Rru_A2693"/>
</dbReference>
<dbReference type="KEGG" id="rru:Rru_A2693"/>
<dbReference type="PATRIC" id="fig|269796.9.peg.2800"/>
<dbReference type="eggNOG" id="COG0048">
    <property type="taxonomic scope" value="Bacteria"/>
</dbReference>
<dbReference type="HOGENOM" id="CLU_104295_1_2_5"/>
<dbReference type="PhylomeDB" id="Q2RQV5"/>
<dbReference type="Proteomes" id="UP000001929">
    <property type="component" value="Chromosome"/>
</dbReference>
<dbReference type="GO" id="GO:0015935">
    <property type="term" value="C:small ribosomal subunit"/>
    <property type="evidence" value="ECO:0007669"/>
    <property type="project" value="InterPro"/>
</dbReference>
<dbReference type="GO" id="GO:0019843">
    <property type="term" value="F:rRNA binding"/>
    <property type="evidence" value="ECO:0007669"/>
    <property type="project" value="UniProtKB-UniRule"/>
</dbReference>
<dbReference type="GO" id="GO:0003735">
    <property type="term" value="F:structural constituent of ribosome"/>
    <property type="evidence" value="ECO:0007669"/>
    <property type="project" value="InterPro"/>
</dbReference>
<dbReference type="GO" id="GO:0000049">
    <property type="term" value="F:tRNA binding"/>
    <property type="evidence" value="ECO:0007669"/>
    <property type="project" value="UniProtKB-UniRule"/>
</dbReference>
<dbReference type="GO" id="GO:0006412">
    <property type="term" value="P:translation"/>
    <property type="evidence" value="ECO:0007669"/>
    <property type="project" value="UniProtKB-UniRule"/>
</dbReference>
<dbReference type="CDD" id="cd03368">
    <property type="entry name" value="Ribosomal_S12"/>
    <property type="match status" value="1"/>
</dbReference>
<dbReference type="FunFam" id="2.40.50.140:FF:000001">
    <property type="entry name" value="30S ribosomal protein S12"/>
    <property type="match status" value="1"/>
</dbReference>
<dbReference type="Gene3D" id="2.40.50.140">
    <property type="entry name" value="Nucleic acid-binding proteins"/>
    <property type="match status" value="1"/>
</dbReference>
<dbReference type="HAMAP" id="MF_00403_B">
    <property type="entry name" value="Ribosomal_uS12_B"/>
    <property type="match status" value="1"/>
</dbReference>
<dbReference type="InterPro" id="IPR012340">
    <property type="entry name" value="NA-bd_OB-fold"/>
</dbReference>
<dbReference type="InterPro" id="IPR006032">
    <property type="entry name" value="Ribosomal_uS12"/>
</dbReference>
<dbReference type="InterPro" id="IPR005679">
    <property type="entry name" value="Ribosomal_uS12_bac"/>
</dbReference>
<dbReference type="NCBIfam" id="TIGR00981">
    <property type="entry name" value="rpsL_bact"/>
    <property type="match status" value="1"/>
</dbReference>
<dbReference type="PANTHER" id="PTHR11652">
    <property type="entry name" value="30S RIBOSOMAL PROTEIN S12 FAMILY MEMBER"/>
    <property type="match status" value="1"/>
</dbReference>
<dbReference type="Pfam" id="PF00164">
    <property type="entry name" value="Ribosom_S12_S23"/>
    <property type="match status" value="1"/>
</dbReference>
<dbReference type="PIRSF" id="PIRSF002133">
    <property type="entry name" value="Ribosomal_S12/S23"/>
    <property type="match status" value="1"/>
</dbReference>
<dbReference type="PRINTS" id="PR01034">
    <property type="entry name" value="RIBOSOMALS12"/>
</dbReference>
<dbReference type="SUPFAM" id="SSF50249">
    <property type="entry name" value="Nucleic acid-binding proteins"/>
    <property type="match status" value="1"/>
</dbReference>
<dbReference type="PROSITE" id="PS00055">
    <property type="entry name" value="RIBOSOMAL_S12"/>
    <property type="match status" value="1"/>
</dbReference>
<evidence type="ECO:0000250" key="1"/>
<evidence type="ECO:0000255" key="2">
    <source>
        <dbReference type="HAMAP-Rule" id="MF_00403"/>
    </source>
</evidence>
<evidence type="ECO:0000256" key="3">
    <source>
        <dbReference type="SAM" id="MobiDB-lite"/>
    </source>
</evidence>
<evidence type="ECO:0000305" key="4"/>